<dbReference type="EC" id="2.4.2.-" evidence="1"/>
<dbReference type="EMBL" id="LT708304">
    <property type="protein sequence ID" value="SIU00617.1"/>
    <property type="molecule type" value="Genomic_DNA"/>
</dbReference>
<dbReference type="RefSeq" id="NP_855661.1">
    <property type="nucleotide sequence ID" value="NC_002945.3"/>
</dbReference>
<dbReference type="RefSeq" id="WP_003410001.1">
    <property type="nucleotide sequence ID" value="NC_002945.4"/>
</dbReference>
<dbReference type="SMR" id="P64908"/>
<dbReference type="KEGG" id="mbo:BQ2027_MB2011C"/>
<dbReference type="PATRIC" id="fig|233413.5.peg.2209"/>
<dbReference type="Proteomes" id="UP000001419">
    <property type="component" value="Chromosome"/>
</dbReference>
<dbReference type="GO" id="GO:0016779">
    <property type="term" value="F:nucleotidyltransferase activity"/>
    <property type="evidence" value="ECO:0007669"/>
    <property type="project" value="UniProtKB-KW"/>
</dbReference>
<dbReference type="InterPro" id="IPR014914">
    <property type="entry name" value="RES_dom"/>
</dbReference>
<dbReference type="Pfam" id="PF08808">
    <property type="entry name" value="RES"/>
    <property type="match status" value="1"/>
</dbReference>
<dbReference type="SMART" id="SM00953">
    <property type="entry name" value="RES"/>
    <property type="match status" value="1"/>
</dbReference>
<feature type="chain" id="PRO_0000103919" description="NAD(+) phosphorylase MbcT">
    <location>
        <begin position="1"/>
        <end position="186"/>
    </location>
</feature>
<gene>
    <name type="primary">mbcT</name>
    <name type="ordered locus">BQ2027_MB2011C</name>
</gene>
<evidence type="ECO:0000250" key="1">
    <source>
        <dbReference type="UniProtKB" id="P9WLP9"/>
    </source>
</evidence>
<evidence type="ECO:0000305" key="2"/>
<protein>
    <recommendedName>
        <fullName evidence="1">NAD(+) phosphorylase MbcT</fullName>
        <ecNumber evidence="1">2.4.2.-</ecNumber>
    </recommendedName>
    <alternativeName>
        <fullName evidence="1">Mycobacterial cidal toxin MbcT</fullName>
    </alternativeName>
</protein>
<accession>P64908</accession>
<accession>A0A1R3Y0A4</accession>
<accession>Q10869</accession>
<accession>X2BJ76</accession>
<name>MBCT_MYCBO</name>
<keyword id="KW-0520">NAD</keyword>
<keyword id="KW-0548">Nucleotidyltransferase</keyword>
<keyword id="KW-1185">Reference proteome</keyword>
<keyword id="KW-1277">Toxin-antitoxin system</keyword>
<keyword id="KW-0808">Transferase</keyword>
<proteinExistence type="inferred from homology"/>
<comment type="function">
    <text evidence="1">Toxic component of a type II toxin-antitoxin (TA) system. Degrades NAD(+) by phosphorolysis. Neutralized by its cognate antitoxin MbcA.</text>
</comment>
<comment type="catalytic activity">
    <reaction evidence="1">
        <text>phosphate + NAD(+) = ADP-alpha-D-ribose 1''-phosphate + nicotinamide + H(+)</text>
        <dbReference type="Rhea" id="RHEA:20788"/>
        <dbReference type="ChEBI" id="CHEBI:15378"/>
        <dbReference type="ChEBI" id="CHEBI:17154"/>
        <dbReference type="ChEBI" id="CHEBI:43474"/>
        <dbReference type="ChEBI" id="CHEBI:57540"/>
        <dbReference type="ChEBI" id="CHEBI:58753"/>
    </reaction>
</comment>
<comment type="subunit">
    <text evidence="1">Forms a heterotetramer with cognate antitoxin MbcA.</text>
</comment>
<comment type="similarity">
    <text evidence="2">Belongs to the MbcT/ParT/Res family.</text>
</comment>
<sequence>MSDALDEGLVQRIDARGTIEWSETCYRYTGAHRDALSGEGARRFGGRWNPPLLFPAIYLADSAQACMVEVERAAQAASTTAEKMLEAAYRLHTIDVTDLAVLDLTTPQAREAVGLENDDIYGDDWSGCQAVGHAAWFLHMQGVLVPAAGGVGLVVTAYEQRTRPGQLQLRQSVDLTPALYQELRAT</sequence>
<organism>
    <name type="scientific">Mycobacterium bovis (strain ATCC BAA-935 / AF2122/97)</name>
    <dbReference type="NCBI Taxonomy" id="233413"/>
    <lineage>
        <taxon>Bacteria</taxon>
        <taxon>Bacillati</taxon>
        <taxon>Actinomycetota</taxon>
        <taxon>Actinomycetes</taxon>
        <taxon>Mycobacteriales</taxon>
        <taxon>Mycobacteriaceae</taxon>
        <taxon>Mycobacterium</taxon>
        <taxon>Mycobacterium tuberculosis complex</taxon>
    </lineage>
</organism>
<reference key="1">
    <citation type="journal article" date="2003" name="Proc. Natl. Acad. Sci. U.S.A.">
        <title>The complete genome sequence of Mycobacterium bovis.</title>
        <authorList>
            <person name="Garnier T."/>
            <person name="Eiglmeier K."/>
            <person name="Camus J.-C."/>
            <person name="Medina N."/>
            <person name="Mansoor H."/>
            <person name="Pryor M."/>
            <person name="Duthoy S."/>
            <person name="Grondin S."/>
            <person name="Lacroix C."/>
            <person name="Monsempe C."/>
            <person name="Simon S."/>
            <person name="Harris B."/>
            <person name="Atkin R."/>
            <person name="Doggett J."/>
            <person name="Mayes R."/>
            <person name="Keating L."/>
            <person name="Wheeler P.R."/>
            <person name="Parkhill J."/>
            <person name="Barrell B.G."/>
            <person name="Cole S.T."/>
            <person name="Gordon S.V."/>
            <person name="Hewinson R.G."/>
        </authorList>
    </citation>
    <scope>NUCLEOTIDE SEQUENCE [LARGE SCALE GENOMIC DNA]</scope>
    <source>
        <strain>ATCC BAA-935 / AF2122/97</strain>
    </source>
</reference>
<reference key="2">
    <citation type="journal article" date="2017" name="Genome Announc.">
        <title>Updated reference genome sequence and annotation of Mycobacterium bovis AF2122/97.</title>
        <authorList>
            <person name="Malone K.M."/>
            <person name="Farrell D."/>
            <person name="Stuber T.P."/>
            <person name="Schubert O.T."/>
            <person name="Aebersold R."/>
            <person name="Robbe-Austerman S."/>
            <person name="Gordon S.V."/>
        </authorList>
    </citation>
    <scope>NUCLEOTIDE SEQUENCE [LARGE SCALE GENOMIC DNA]</scope>
    <scope>GENOME REANNOTATION</scope>
    <source>
        <strain>ATCC BAA-935 / AF2122/97</strain>
    </source>
</reference>